<gene>
    <name evidence="1" type="primary">aroC</name>
    <name type="ordered locus">LBJ_0136</name>
</gene>
<protein>
    <recommendedName>
        <fullName evidence="1">Chorismate synthase</fullName>
        <shortName evidence="1">CS</shortName>
        <ecNumber evidence="1">4.2.3.5</ecNumber>
    </recommendedName>
    <alternativeName>
        <fullName evidence="1">5-enolpyruvylshikimate-3-phosphate phospholyase</fullName>
    </alternativeName>
</protein>
<comment type="function">
    <text evidence="1">Catalyzes the anti-1,4-elimination of the C-3 phosphate and the C-6 proR hydrogen from 5-enolpyruvylshikimate-3-phosphate (EPSP) to yield chorismate, which is the branch point compound that serves as the starting substrate for the three terminal pathways of aromatic amino acid biosynthesis. This reaction introduces a second double bond into the aromatic ring system.</text>
</comment>
<comment type="catalytic activity">
    <reaction evidence="1">
        <text>5-O-(1-carboxyvinyl)-3-phosphoshikimate = chorismate + phosphate</text>
        <dbReference type="Rhea" id="RHEA:21020"/>
        <dbReference type="ChEBI" id="CHEBI:29748"/>
        <dbReference type="ChEBI" id="CHEBI:43474"/>
        <dbReference type="ChEBI" id="CHEBI:57701"/>
        <dbReference type="EC" id="4.2.3.5"/>
    </reaction>
</comment>
<comment type="cofactor">
    <cofactor evidence="1">
        <name>FMNH2</name>
        <dbReference type="ChEBI" id="CHEBI:57618"/>
    </cofactor>
    <text evidence="1">Reduced FMN (FMNH(2)).</text>
</comment>
<comment type="pathway">
    <text evidence="1">Metabolic intermediate biosynthesis; chorismate biosynthesis; chorismate from D-erythrose 4-phosphate and phosphoenolpyruvate: step 7/7.</text>
</comment>
<comment type="subunit">
    <text evidence="1">Homotetramer.</text>
</comment>
<comment type="similarity">
    <text evidence="1">Belongs to the chorismate synthase family.</text>
</comment>
<name>AROC_LEPBJ</name>
<proteinExistence type="inferred from homology"/>
<organism>
    <name type="scientific">Leptospira borgpetersenii serovar Hardjo-bovis (strain JB197)</name>
    <dbReference type="NCBI Taxonomy" id="355277"/>
    <lineage>
        <taxon>Bacteria</taxon>
        <taxon>Pseudomonadati</taxon>
        <taxon>Spirochaetota</taxon>
        <taxon>Spirochaetia</taxon>
        <taxon>Leptospirales</taxon>
        <taxon>Leptospiraceae</taxon>
        <taxon>Leptospira</taxon>
    </lineage>
</organism>
<evidence type="ECO:0000255" key="1">
    <source>
        <dbReference type="HAMAP-Rule" id="MF_00300"/>
    </source>
</evidence>
<accession>Q04W40</accession>
<dbReference type="EC" id="4.2.3.5" evidence="1"/>
<dbReference type="EMBL" id="CP000350">
    <property type="protein sequence ID" value="ABJ74880.1"/>
    <property type="molecule type" value="Genomic_DNA"/>
</dbReference>
<dbReference type="RefSeq" id="WP_011671167.1">
    <property type="nucleotide sequence ID" value="NC_008510.1"/>
</dbReference>
<dbReference type="SMR" id="Q04W40"/>
<dbReference type="KEGG" id="lbj:LBJ_0136"/>
<dbReference type="HOGENOM" id="CLU_034547_0_2_12"/>
<dbReference type="UniPathway" id="UPA00053">
    <property type="reaction ID" value="UER00090"/>
</dbReference>
<dbReference type="Proteomes" id="UP000000656">
    <property type="component" value="Chromosome 1"/>
</dbReference>
<dbReference type="GO" id="GO:0005829">
    <property type="term" value="C:cytosol"/>
    <property type="evidence" value="ECO:0007669"/>
    <property type="project" value="TreeGrafter"/>
</dbReference>
<dbReference type="GO" id="GO:0004107">
    <property type="term" value="F:chorismate synthase activity"/>
    <property type="evidence" value="ECO:0007669"/>
    <property type="project" value="UniProtKB-UniRule"/>
</dbReference>
<dbReference type="GO" id="GO:0010181">
    <property type="term" value="F:FMN binding"/>
    <property type="evidence" value="ECO:0007669"/>
    <property type="project" value="TreeGrafter"/>
</dbReference>
<dbReference type="GO" id="GO:0008652">
    <property type="term" value="P:amino acid biosynthetic process"/>
    <property type="evidence" value="ECO:0007669"/>
    <property type="project" value="UniProtKB-KW"/>
</dbReference>
<dbReference type="GO" id="GO:0009073">
    <property type="term" value="P:aromatic amino acid family biosynthetic process"/>
    <property type="evidence" value="ECO:0007669"/>
    <property type="project" value="UniProtKB-KW"/>
</dbReference>
<dbReference type="GO" id="GO:0009423">
    <property type="term" value="P:chorismate biosynthetic process"/>
    <property type="evidence" value="ECO:0007669"/>
    <property type="project" value="UniProtKB-UniRule"/>
</dbReference>
<dbReference type="CDD" id="cd07304">
    <property type="entry name" value="Chorismate_synthase"/>
    <property type="match status" value="1"/>
</dbReference>
<dbReference type="FunFam" id="3.60.150.10:FF:000003">
    <property type="entry name" value="Chorismate synthase"/>
    <property type="match status" value="1"/>
</dbReference>
<dbReference type="Gene3D" id="3.60.150.10">
    <property type="entry name" value="Chorismate synthase AroC"/>
    <property type="match status" value="1"/>
</dbReference>
<dbReference type="HAMAP" id="MF_00300">
    <property type="entry name" value="Chorismate_synth"/>
    <property type="match status" value="1"/>
</dbReference>
<dbReference type="InterPro" id="IPR000453">
    <property type="entry name" value="Chorismate_synth"/>
</dbReference>
<dbReference type="InterPro" id="IPR035904">
    <property type="entry name" value="Chorismate_synth_AroC_sf"/>
</dbReference>
<dbReference type="InterPro" id="IPR020541">
    <property type="entry name" value="Chorismate_synthase_CS"/>
</dbReference>
<dbReference type="NCBIfam" id="TIGR00033">
    <property type="entry name" value="aroC"/>
    <property type="match status" value="1"/>
</dbReference>
<dbReference type="NCBIfam" id="NF003793">
    <property type="entry name" value="PRK05382.1"/>
    <property type="match status" value="1"/>
</dbReference>
<dbReference type="PANTHER" id="PTHR21085">
    <property type="entry name" value="CHORISMATE SYNTHASE"/>
    <property type="match status" value="1"/>
</dbReference>
<dbReference type="PANTHER" id="PTHR21085:SF0">
    <property type="entry name" value="CHORISMATE SYNTHASE"/>
    <property type="match status" value="1"/>
</dbReference>
<dbReference type="Pfam" id="PF01264">
    <property type="entry name" value="Chorismate_synt"/>
    <property type="match status" value="1"/>
</dbReference>
<dbReference type="PIRSF" id="PIRSF001456">
    <property type="entry name" value="Chorismate_synth"/>
    <property type="match status" value="1"/>
</dbReference>
<dbReference type="SUPFAM" id="SSF103263">
    <property type="entry name" value="Chorismate synthase, AroC"/>
    <property type="match status" value="1"/>
</dbReference>
<dbReference type="PROSITE" id="PS00787">
    <property type="entry name" value="CHORISMATE_SYNTHASE_1"/>
    <property type="match status" value="1"/>
</dbReference>
<dbReference type="PROSITE" id="PS00789">
    <property type="entry name" value="CHORISMATE_SYNTHASE_3"/>
    <property type="match status" value="1"/>
</dbReference>
<keyword id="KW-0028">Amino-acid biosynthesis</keyword>
<keyword id="KW-0057">Aromatic amino acid biosynthesis</keyword>
<keyword id="KW-0274">FAD</keyword>
<keyword id="KW-0285">Flavoprotein</keyword>
<keyword id="KW-0288">FMN</keyword>
<keyword id="KW-0456">Lyase</keyword>
<keyword id="KW-0521">NADP</keyword>
<reference key="1">
    <citation type="journal article" date="2006" name="Proc. Natl. Acad. Sci. U.S.A.">
        <title>Genome reduction in Leptospira borgpetersenii reflects limited transmission potential.</title>
        <authorList>
            <person name="Bulach D.M."/>
            <person name="Zuerner R.L."/>
            <person name="Wilson P."/>
            <person name="Seemann T."/>
            <person name="McGrath A."/>
            <person name="Cullen P.A."/>
            <person name="Davis J."/>
            <person name="Johnson M."/>
            <person name="Kuczek E."/>
            <person name="Alt D.P."/>
            <person name="Peterson-Burch B."/>
            <person name="Coppel R.L."/>
            <person name="Rood J.I."/>
            <person name="Davies J.K."/>
            <person name="Adler B."/>
        </authorList>
    </citation>
    <scope>NUCLEOTIDE SEQUENCE [LARGE SCALE GENOMIC DNA]</scope>
    <source>
        <strain>JB197</strain>
    </source>
</reference>
<sequence length="380" mass="41454">MPSSWGKIFKVGTFGESHGKSVGVIVEGVPAGIPIRLEEIQKDLDRRRPGQSNLTTPRDENDTVRVVSGVFEGKTIGSPIALVVENQNTNSKDYENLRTTYRPSHADYTYQMKYGFRAHVGGGRSSVRETIGRVAAAAIARMILKDDLGIETVAWVDSIGTIQSTIGEKYPKSREEVDQNEVRCPDAVSADQMRSLILKMKEAGDSVGGTIKCVSYNLPPGLGDPVYDKLDGDLAKAILSIPACKGFEVGSGFSGTLLTGSSHNDEFYVEGGTGKVRTKTNNSGGLQGGISNGEELVIRAAFKPTSTIFKKQNTINLKGEETTLEAKGRHDPCVLPRAVPIIEAVVNLVLVDAYLYQRAINPQWFQKWARIPDYYKDLEL</sequence>
<feature type="chain" id="PRO_1000022506" description="Chorismate synthase">
    <location>
        <begin position="1"/>
        <end position="380"/>
    </location>
</feature>
<feature type="binding site" evidence="1">
    <location>
        <position position="47"/>
    </location>
    <ligand>
        <name>NADP(+)</name>
        <dbReference type="ChEBI" id="CHEBI:58349"/>
    </ligand>
</feature>
<feature type="binding site" evidence="1">
    <location>
        <begin position="124"/>
        <end position="126"/>
    </location>
    <ligand>
        <name>FMN</name>
        <dbReference type="ChEBI" id="CHEBI:58210"/>
    </ligand>
</feature>
<feature type="binding site" evidence="1">
    <location>
        <position position="288"/>
    </location>
    <ligand>
        <name>FMN</name>
        <dbReference type="ChEBI" id="CHEBI:58210"/>
    </ligand>
</feature>
<feature type="binding site" evidence="1">
    <location>
        <begin position="303"/>
        <end position="307"/>
    </location>
    <ligand>
        <name>FMN</name>
        <dbReference type="ChEBI" id="CHEBI:58210"/>
    </ligand>
</feature>
<feature type="binding site" evidence="1">
    <location>
        <position position="329"/>
    </location>
    <ligand>
        <name>FMN</name>
        <dbReference type="ChEBI" id="CHEBI:58210"/>
    </ligand>
</feature>